<sequence length="155" mass="17357">MSRRGTAEEKTAKSDPIYRNRLVNMLVNRILKHGKKSLAYQIIYRALKKIQQKTETNPLSVLRQAIRGVTPDIAVKARRVGGSTHQVPIEIGSTQGKALAIRWLLGASRKRPGRNMAFKLSSELVDAAKGSGDAIRKKEETHRMAEANRAFAHFR</sequence>
<organism>
    <name type="scientific">Aethionema grandiflorum</name>
    <name type="common">Persian stone-cress</name>
    <dbReference type="NCBI Taxonomy" id="72657"/>
    <lineage>
        <taxon>Eukaryota</taxon>
        <taxon>Viridiplantae</taxon>
        <taxon>Streptophyta</taxon>
        <taxon>Embryophyta</taxon>
        <taxon>Tracheophyta</taxon>
        <taxon>Spermatophyta</taxon>
        <taxon>Magnoliopsida</taxon>
        <taxon>eudicotyledons</taxon>
        <taxon>Gunneridae</taxon>
        <taxon>Pentapetalae</taxon>
        <taxon>rosids</taxon>
        <taxon>malvids</taxon>
        <taxon>Brassicales</taxon>
        <taxon>Brassicaceae</taxon>
        <taxon>Aethionemeae</taxon>
        <taxon>Aethionema</taxon>
    </lineage>
</organism>
<evidence type="ECO:0000250" key="1"/>
<evidence type="ECO:0000255" key="2">
    <source>
        <dbReference type="HAMAP-Rule" id="MF_00480"/>
    </source>
</evidence>
<evidence type="ECO:0000305" key="3"/>
<dbReference type="EMBL" id="AP009367">
    <property type="protein sequence ID" value="BAF49899.1"/>
    <property type="molecule type" value="Genomic_DNA"/>
</dbReference>
<dbReference type="EMBL" id="AP009367">
    <property type="protein sequence ID" value="BAF49914.1"/>
    <property type="molecule type" value="Genomic_DNA"/>
</dbReference>
<dbReference type="SMR" id="A4QJP4"/>
<dbReference type="GO" id="GO:0009507">
    <property type="term" value="C:chloroplast"/>
    <property type="evidence" value="ECO:0007669"/>
    <property type="project" value="UniProtKB-SubCell"/>
</dbReference>
<dbReference type="GO" id="GO:0015935">
    <property type="term" value="C:small ribosomal subunit"/>
    <property type="evidence" value="ECO:0007669"/>
    <property type="project" value="InterPro"/>
</dbReference>
<dbReference type="GO" id="GO:0019843">
    <property type="term" value="F:rRNA binding"/>
    <property type="evidence" value="ECO:0007669"/>
    <property type="project" value="UniProtKB-UniRule"/>
</dbReference>
<dbReference type="GO" id="GO:0003735">
    <property type="term" value="F:structural constituent of ribosome"/>
    <property type="evidence" value="ECO:0007669"/>
    <property type="project" value="InterPro"/>
</dbReference>
<dbReference type="GO" id="GO:0006412">
    <property type="term" value="P:translation"/>
    <property type="evidence" value="ECO:0007669"/>
    <property type="project" value="UniProtKB-UniRule"/>
</dbReference>
<dbReference type="CDD" id="cd14871">
    <property type="entry name" value="uS7_Chloroplast"/>
    <property type="match status" value="1"/>
</dbReference>
<dbReference type="FunFam" id="1.10.455.10:FF:000001">
    <property type="entry name" value="30S ribosomal protein S7"/>
    <property type="match status" value="1"/>
</dbReference>
<dbReference type="Gene3D" id="1.10.455.10">
    <property type="entry name" value="Ribosomal protein S7 domain"/>
    <property type="match status" value="1"/>
</dbReference>
<dbReference type="HAMAP" id="MF_00480_B">
    <property type="entry name" value="Ribosomal_uS7_B"/>
    <property type="match status" value="1"/>
</dbReference>
<dbReference type="InterPro" id="IPR000235">
    <property type="entry name" value="Ribosomal_uS7"/>
</dbReference>
<dbReference type="InterPro" id="IPR005717">
    <property type="entry name" value="Ribosomal_uS7_bac/org-type"/>
</dbReference>
<dbReference type="InterPro" id="IPR020606">
    <property type="entry name" value="Ribosomal_uS7_CS"/>
</dbReference>
<dbReference type="InterPro" id="IPR023798">
    <property type="entry name" value="Ribosomal_uS7_dom"/>
</dbReference>
<dbReference type="InterPro" id="IPR036823">
    <property type="entry name" value="Ribosomal_uS7_dom_sf"/>
</dbReference>
<dbReference type="NCBIfam" id="TIGR01029">
    <property type="entry name" value="rpsG_bact"/>
    <property type="match status" value="1"/>
</dbReference>
<dbReference type="PANTHER" id="PTHR11205">
    <property type="entry name" value="RIBOSOMAL PROTEIN S7"/>
    <property type="match status" value="1"/>
</dbReference>
<dbReference type="Pfam" id="PF00177">
    <property type="entry name" value="Ribosomal_S7"/>
    <property type="match status" value="1"/>
</dbReference>
<dbReference type="PIRSF" id="PIRSF002122">
    <property type="entry name" value="RPS7p_RPS7a_RPS5e_RPS7o"/>
    <property type="match status" value="1"/>
</dbReference>
<dbReference type="SUPFAM" id="SSF47973">
    <property type="entry name" value="Ribosomal protein S7"/>
    <property type="match status" value="1"/>
</dbReference>
<dbReference type="PROSITE" id="PS00052">
    <property type="entry name" value="RIBOSOMAL_S7"/>
    <property type="match status" value="1"/>
</dbReference>
<keyword id="KW-0150">Chloroplast</keyword>
<keyword id="KW-0934">Plastid</keyword>
<keyword id="KW-0687">Ribonucleoprotein</keyword>
<keyword id="KW-0689">Ribosomal protein</keyword>
<keyword id="KW-0694">RNA-binding</keyword>
<keyword id="KW-0699">rRNA-binding</keyword>
<reference key="1">
    <citation type="submission" date="2007-03" db="EMBL/GenBank/DDBJ databases">
        <title>Sequencing analysis of Aethionema grandiflorum chloroplast DNA.</title>
        <authorList>
            <person name="Hosouchi T."/>
            <person name="Tsuruoka H."/>
            <person name="Kotani H."/>
        </authorList>
    </citation>
    <scope>NUCLEOTIDE SEQUENCE [LARGE SCALE GENOMIC DNA]</scope>
</reference>
<protein>
    <recommendedName>
        <fullName evidence="2">Small ribosomal subunit protein uS7cz/uS7cy</fullName>
    </recommendedName>
    <alternativeName>
        <fullName>30S ribosomal protein S7, chloroplastic</fullName>
    </alternativeName>
</protein>
<accession>A4QJP4</accession>
<feature type="chain" id="PRO_0000344322" description="Small ribosomal subunit protein uS7cz/uS7cy">
    <location>
        <begin position="1"/>
        <end position="155"/>
    </location>
</feature>
<name>RR7_AETGR</name>
<proteinExistence type="inferred from homology"/>
<geneLocation type="chloroplast"/>
<comment type="function">
    <text evidence="1">One of the primary rRNA binding proteins, it binds directly to 16S rRNA where it nucleates assembly of the head domain of the 30S subunit.</text>
</comment>
<comment type="subunit">
    <text evidence="1">Part of the 30S ribosomal subunit.</text>
</comment>
<comment type="subcellular location">
    <subcellularLocation>
        <location>Plastid</location>
        <location>Chloroplast</location>
    </subcellularLocation>
</comment>
<comment type="similarity">
    <text evidence="3">Belongs to the universal ribosomal protein uS7 family.</text>
</comment>
<gene>
    <name type="primary">rps7-A</name>
</gene>
<gene>
    <name type="primary">rps7-B</name>
</gene>